<dbReference type="EC" id="6.3.2.1" evidence="1"/>
<dbReference type="EMBL" id="CP000509">
    <property type="protein sequence ID" value="ABL80002.1"/>
    <property type="molecule type" value="Genomic_DNA"/>
</dbReference>
<dbReference type="RefSeq" id="WP_011753953.1">
    <property type="nucleotide sequence ID" value="NC_008699.1"/>
</dbReference>
<dbReference type="SMR" id="A1SDW7"/>
<dbReference type="STRING" id="196162.Noca_0460"/>
<dbReference type="KEGG" id="nca:Noca_0460"/>
<dbReference type="eggNOG" id="COG0414">
    <property type="taxonomic scope" value="Bacteria"/>
</dbReference>
<dbReference type="HOGENOM" id="CLU_047148_0_2_11"/>
<dbReference type="OrthoDB" id="9773087at2"/>
<dbReference type="UniPathway" id="UPA00028">
    <property type="reaction ID" value="UER00005"/>
</dbReference>
<dbReference type="Proteomes" id="UP000000640">
    <property type="component" value="Chromosome"/>
</dbReference>
<dbReference type="GO" id="GO:0005829">
    <property type="term" value="C:cytosol"/>
    <property type="evidence" value="ECO:0007669"/>
    <property type="project" value="TreeGrafter"/>
</dbReference>
<dbReference type="GO" id="GO:0005524">
    <property type="term" value="F:ATP binding"/>
    <property type="evidence" value="ECO:0007669"/>
    <property type="project" value="UniProtKB-KW"/>
</dbReference>
<dbReference type="GO" id="GO:0004592">
    <property type="term" value="F:pantoate-beta-alanine ligase activity"/>
    <property type="evidence" value="ECO:0007669"/>
    <property type="project" value="UniProtKB-UniRule"/>
</dbReference>
<dbReference type="GO" id="GO:0015940">
    <property type="term" value="P:pantothenate biosynthetic process"/>
    <property type="evidence" value="ECO:0007669"/>
    <property type="project" value="UniProtKB-UniRule"/>
</dbReference>
<dbReference type="CDD" id="cd00560">
    <property type="entry name" value="PanC"/>
    <property type="match status" value="1"/>
</dbReference>
<dbReference type="FunFam" id="3.40.50.620:FF:000114">
    <property type="entry name" value="Pantothenate synthetase"/>
    <property type="match status" value="1"/>
</dbReference>
<dbReference type="Gene3D" id="3.40.50.620">
    <property type="entry name" value="HUPs"/>
    <property type="match status" value="1"/>
</dbReference>
<dbReference type="Gene3D" id="3.30.1300.10">
    <property type="entry name" value="Pantoate-beta-alanine ligase, C-terminal domain"/>
    <property type="match status" value="1"/>
</dbReference>
<dbReference type="HAMAP" id="MF_00158">
    <property type="entry name" value="PanC"/>
    <property type="match status" value="1"/>
</dbReference>
<dbReference type="InterPro" id="IPR003721">
    <property type="entry name" value="Pantoate_ligase"/>
</dbReference>
<dbReference type="InterPro" id="IPR042176">
    <property type="entry name" value="Pantoate_ligase_C"/>
</dbReference>
<dbReference type="InterPro" id="IPR014729">
    <property type="entry name" value="Rossmann-like_a/b/a_fold"/>
</dbReference>
<dbReference type="NCBIfam" id="TIGR00018">
    <property type="entry name" value="panC"/>
    <property type="match status" value="1"/>
</dbReference>
<dbReference type="PANTHER" id="PTHR21299">
    <property type="entry name" value="CYTIDYLATE KINASE/PANTOATE-BETA-ALANINE LIGASE"/>
    <property type="match status" value="1"/>
</dbReference>
<dbReference type="PANTHER" id="PTHR21299:SF1">
    <property type="entry name" value="PANTOATE--BETA-ALANINE LIGASE"/>
    <property type="match status" value="1"/>
</dbReference>
<dbReference type="Pfam" id="PF02569">
    <property type="entry name" value="Pantoate_ligase"/>
    <property type="match status" value="1"/>
</dbReference>
<dbReference type="SUPFAM" id="SSF52374">
    <property type="entry name" value="Nucleotidylyl transferase"/>
    <property type="match status" value="1"/>
</dbReference>
<evidence type="ECO:0000255" key="1">
    <source>
        <dbReference type="HAMAP-Rule" id="MF_00158"/>
    </source>
</evidence>
<evidence type="ECO:0000256" key="2">
    <source>
        <dbReference type="SAM" id="MobiDB-lite"/>
    </source>
</evidence>
<organism>
    <name type="scientific">Nocardioides sp. (strain ATCC BAA-499 / JS614)</name>
    <dbReference type="NCBI Taxonomy" id="196162"/>
    <lineage>
        <taxon>Bacteria</taxon>
        <taxon>Bacillati</taxon>
        <taxon>Actinomycetota</taxon>
        <taxon>Actinomycetes</taxon>
        <taxon>Propionibacteriales</taxon>
        <taxon>Nocardioidaceae</taxon>
        <taxon>Nocardioides</taxon>
    </lineage>
</organism>
<reference key="1">
    <citation type="submission" date="2006-12" db="EMBL/GenBank/DDBJ databases">
        <title>Complete sequence of chromosome 1 of Nocardioides sp. JS614.</title>
        <authorList>
            <person name="Copeland A."/>
            <person name="Lucas S."/>
            <person name="Lapidus A."/>
            <person name="Barry K."/>
            <person name="Detter J.C."/>
            <person name="Glavina del Rio T."/>
            <person name="Hammon N."/>
            <person name="Israni S."/>
            <person name="Dalin E."/>
            <person name="Tice H."/>
            <person name="Pitluck S."/>
            <person name="Thompson L.S."/>
            <person name="Brettin T."/>
            <person name="Bruce D."/>
            <person name="Han C."/>
            <person name="Tapia R."/>
            <person name="Schmutz J."/>
            <person name="Larimer F."/>
            <person name="Land M."/>
            <person name="Hauser L."/>
            <person name="Kyrpides N."/>
            <person name="Kim E."/>
            <person name="Mattes T."/>
            <person name="Gossett J."/>
            <person name="Richardson P."/>
        </authorList>
    </citation>
    <scope>NUCLEOTIDE SEQUENCE [LARGE SCALE GENOMIC DNA]</scope>
    <source>
        <strain>ATCC BAA-499 / JS614</strain>
    </source>
</reference>
<sequence length="334" mass="35428">MSSAPVLAHTREELATLLAAARARGEQVGLVPTMGALHEGHASLVRAARERVTDDGRMGPVVVSVFVNPLQFGANEDLDRYPRTLEADLEVCAREGADIVFAPSVDEVYPGGPPQVTVRPGPLGKILEGKVRPGHFRGVLTVVAKLFGLVRPDVAVFGQKDYQQLALIRRMVLDLALGVEIVAAETVREDDGLALSSRNRYLEPEQREQAVALSRALLAAQENAGYGAEVALDEARAELRAAPGVDLDYLVITDPDLDELPAVVPPGTPARILVAARVGGTRLIDNLPLMLGTRGPAGEASPPNRERSEPGSAEQNKSPGEARTTPSGTSEASE</sequence>
<feature type="chain" id="PRO_0000305501" description="Pantothenate synthetase">
    <location>
        <begin position="1"/>
        <end position="334"/>
    </location>
</feature>
<feature type="region of interest" description="Disordered" evidence="2">
    <location>
        <begin position="288"/>
        <end position="334"/>
    </location>
</feature>
<feature type="compositionally biased region" description="Polar residues" evidence="2">
    <location>
        <begin position="313"/>
        <end position="334"/>
    </location>
</feature>
<feature type="active site" description="Proton donor" evidence="1">
    <location>
        <position position="41"/>
    </location>
</feature>
<feature type="binding site" evidence="1">
    <location>
        <begin position="34"/>
        <end position="41"/>
    </location>
    <ligand>
        <name>ATP</name>
        <dbReference type="ChEBI" id="CHEBI:30616"/>
    </ligand>
</feature>
<feature type="binding site" evidence="1">
    <location>
        <position position="71"/>
    </location>
    <ligand>
        <name>(R)-pantoate</name>
        <dbReference type="ChEBI" id="CHEBI:15980"/>
    </ligand>
</feature>
<feature type="binding site" evidence="1">
    <location>
        <position position="71"/>
    </location>
    <ligand>
        <name>beta-alanine</name>
        <dbReference type="ChEBI" id="CHEBI:57966"/>
    </ligand>
</feature>
<feature type="binding site" evidence="1">
    <location>
        <begin position="158"/>
        <end position="161"/>
    </location>
    <ligand>
        <name>ATP</name>
        <dbReference type="ChEBI" id="CHEBI:30616"/>
    </ligand>
</feature>
<feature type="binding site" evidence="1">
    <location>
        <position position="164"/>
    </location>
    <ligand>
        <name>(R)-pantoate</name>
        <dbReference type="ChEBI" id="CHEBI:15980"/>
    </ligand>
</feature>
<feature type="binding site" evidence="1">
    <location>
        <position position="187"/>
    </location>
    <ligand>
        <name>ATP</name>
        <dbReference type="ChEBI" id="CHEBI:30616"/>
    </ligand>
</feature>
<feature type="binding site" evidence="1">
    <location>
        <begin position="195"/>
        <end position="198"/>
    </location>
    <ligand>
        <name>ATP</name>
        <dbReference type="ChEBI" id="CHEBI:30616"/>
    </ligand>
</feature>
<accession>A1SDW7</accession>
<name>PANC_NOCSJ</name>
<comment type="function">
    <text evidence="1">Catalyzes the condensation of pantoate with beta-alanine in an ATP-dependent reaction via a pantoyl-adenylate intermediate.</text>
</comment>
<comment type="catalytic activity">
    <reaction evidence="1">
        <text>(R)-pantoate + beta-alanine + ATP = (R)-pantothenate + AMP + diphosphate + H(+)</text>
        <dbReference type="Rhea" id="RHEA:10912"/>
        <dbReference type="ChEBI" id="CHEBI:15378"/>
        <dbReference type="ChEBI" id="CHEBI:15980"/>
        <dbReference type="ChEBI" id="CHEBI:29032"/>
        <dbReference type="ChEBI" id="CHEBI:30616"/>
        <dbReference type="ChEBI" id="CHEBI:33019"/>
        <dbReference type="ChEBI" id="CHEBI:57966"/>
        <dbReference type="ChEBI" id="CHEBI:456215"/>
        <dbReference type="EC" id="6.3.2.1"/>
    </reaction>
</comment>
<comment type="pathway">
    <text evidence="1">Cofactor biosynthesis; (R)-pantothenate biosynthesis; (R)-pantothenate from (R)-pantoate and beta-alanine: step 1/1.</text>
</comment>
<comment type="subunit">
    <text evidence="1">Homodimer.</text>
</comment>
<comment type="subcellular location">
    <subcellularLocation>
        <location evidence="1">Cytoplasm</location>
    </subcellularLocation>
</comment>
<comment type="miscellaneous">
    <text evidence="1">The reaction proceeds by a bi uni uni bi ping pong mechanism.</text>
</comment>
<comment type="similarity">
    <text evidence="1">Belongs to the pantothenate synthetase family.</text>
</comment>
<protein>
    <recommendedName>
        <fullName evidence="1">Pantothenate synthetase</fullName>
        <shortName evidence="1">PS</shortName>
        <ecNumber evidence="1">6.3.2.1</ecNumber>
    </recommendedName>
    <alternativeName>
        <fullName evidence="1">Pantoate--beta-alanine ligase</fullName>
    </alternativeName>
    <alternativeName>
        <fullName evidence="1">Pantoate-activating enzyme</fullName>
    </alternativeName>
</protein>
<gene>
    <name evidence="1" type="primary">panC</name>
    <name type="ordered locus">Noca_0460</name>
</gene>
<keyword id="KW-0067">ATP-binding</keyword>
<keyword id="KW-0963">Cytoplasm</keyword>
<keyword id="KW-0436">Ligase</keyword>
<keyword id="KW-0547">Nucleotide-binding</keyword>
<keyword id="KW-0566">Pantothenate biosynthesis</keyword>
<keyword id="KW-1185">Reference proteome</keyword>
<proteinExistence type="inferred from homology"/>